<evidence type="ECO:0000250" key="1"/>
<evidence type="ECO:0000255" key="2"/>
<evidence type="ECO:0000305" key="3"/>
<organism>
    <name type="scientific">Arabidopsis thaliana</name>
    <name type="common">Mouse-ear cress</name>
    <dbReference type="NCBI Taxonomy" id="3702"/>
    <lineage>
        <taxon>Eukaryota</taxon>
        <taxon>Viridiplantae</taxon>
        <taxon>Streptophyta</taxon>
        <taxon>Embryophyta</taxon>
        <taxon>Tracheophyta</taxon>
        <taxon>Spermatophyta</taxon>
        <taxon>Magnoliopsida</taxon>
        <taxon>eudicotyledons</taxon>
        <taxon>Gunneridae</taxon>
        <taxon>Pentapetalae</taxon>
        <taxon>rosids</taxon>
        <taxon>malvids</taxon>
        <taxon>Brassicales</taxon>
        <taxon>Brassicaceae</taxon>
        <taxon>Camelineae</taxon>
        <taxon>Arabidopsis</taxon>
    </lineage>
</organism>
<name>DF221_ARATH</name>
<proteinExistence type="inferred from homology"/>
<accession>Q2V306</accession>
<dbReference type="EMBL" id="AB020745">
    <property type="status" value="NOT_ANNOTATED_CDS"/>
    <property type="molecule type" value="Genomic_DNA"/>
</dbReference>
<dbReference type="EMBL" id="CP002688">
    <property type="protein sequence ID" value="AED95680.1"/>
    <property type="molecule type" value="Genomic_DNA"/>
</dbReference>
<dbReference type="RefSeq" id="NP_001032033.1">
    <property type="nucleotide sequence ID" value="NM_001036956.1"/>
</dbReference>
<dbReference type="SMR" id="Q2V306"/>
<dbReference type="PaxDb" id="3702-AT5G48515.1"/>
<dbReference type="EnsemblPlants" id="AT5G48515.1">
    <property type="protein sequence ID" value="AT5G48515.1"/>
    <property type="gene ID" value="AT5G48515"/>
</dbReference>
<dbReference type="GeneID" id="3771463"/>
<dbReference type="Gramene" id="AT5G48515.1">
    <property type="protein sequence ID" value="AT5G48515.1"/>
    <property type="gene ID" value="AT5G48515"/>
</dbReference>
<dbReference type="KEGG" id="ath:AT5G48515"/>
<dbReference type="Araport" id="AT5G48515"/>
<dbReference type="TAIR" id="AT5G48515"/>
<dbReference type="HOGENOM" id="CLU_180309_0_0_1"/>
<dbReference type="InParanoid" id="Q2V306"/>
<dbReference type="OMA" id="NIPHCEN"/>
<dbReference type="PhylomeDB" id="Q2V306"/>
<dbReference type="PRO" id="PR:Q2V306"/>
<dbReference type="Proteomes" id="UP000006548">
    <property type="component" value="Chromosome 5"/>
</dbReference>
<dbReference type="ExpressionAtlas" id="Q2V306">
    <property type="expression patterns" value="baseline"/>
</dbReference>
<dbReference type="GO" id="GO:0005576">
    <property type="term" value="C:extracellular region"/>
    <property type="evidence" value="ECO:0007669"/>
    <property type="project" value="UniProtKB-SubCell"/>
</dbReference>
<dbReference type="GO" id="GO:0050832">
    <property type="term" value="P:defense response to fungus"/>
    <property type="evidence" value="ECO:0007669"/>
    <property type="project" value="UniProtKB-KW"/>
</dbReference>
<dbReference type="GO" id="GO:0031640">
    <property type="term" value="P:killing of cells of another organism"/>
    <property type="evidence" value="ECO:0007669"/>
    <property type="project" value="UniProtKB-KW"/>
</dbReference>
<sequence length="91" mass="10316">MKTLFFFLTIAVLVSSCTSNIMTKSILEGKTQFSIPSLSSTIDPAYEHIGHFPDDMKIIFCQQCAFHCIEKKKNIPHCENSICRCTLENIL</sequence>
<keyword id="KW-0929">Antimicrobial</keyword>
<keyword id="KW-1015">Disulfide bond</keyword>
<keyword id="KW-0295">Fungicide</keyword>
<keyword id="KW-0611">Plant defense</keyword>
<keyword id="KW-1185">Reference proteome</keyword>
<keyword id="KW-0964">Secreted</keyword>
<keyword id="KW-0732">Signal</keyword>
<feature type="signal peptide" evidence="2">
    <location>
        <begin position="1"/>
        <end position="19"/>
    </location>
</feature>
<feature type="chain" id="PRO_0000379713" description="Putative defensin-like protein 221">
    <location>
        <begin position="20"/>
        <end position="91"/>
    </location>
</feature>
<feature type="disulfide bond" evidence="1">
    <location>
        <begin position="61"/>
        <end position="78"/>
    </location>
</feature>
<feature type="disulfide bond" evidence="1">
    <location>
        <begin position="64"/>
        <end position="83"/>
    </location>
</feature>
<feature type="disulfide bond" evidence="1">
    <location>
        <begin position="68"/>
        <end position="85"/>
    </location>
</feature>
<protein>
    <recommendedName>
        <fullName>Putative defensin-like protein 221</fullName>
    </recommendedName>
</protein>
<comment type="subcellular location">
    <subcellularLocation>
        <location evidence="1">Secreted</location>
    </subcellularLocation>
</comment>
<comment type="similarity">
    <text evidence="3">Belongs to the DEFL family.</text>
</comment>
<comment type="caution">
    <text evidence="3">Lacks 1 of the 4 disulfide bonds, which are conserved features of the family.</text>
</comment>
<reference key="1">
    <citation type="journal article" date="2000" name="DNA Res.">
        <title>Structural analysis of Arabidopsis thaliana chromosome 5. X. Sequence features of the regions of 3,076,755 bp covered by sixty P1 and TAC clones.</title>
        <authorList>
            <person name="Sato S."/>
            <person name="Nakamura Y."/>
            <person name="Kaneko T."/>
            <person name="Katoh T."/>
            <person name="Asamizu E."/>
            <person name="Kotani H."/>
            <person name="Tabata S."/>
        </authorList>
    </citation>
    <scope>NUCLEOTIDE SEQUENCE [LARGE SCALE GENOMIC DNA]</scope>
    <source>
        <strain>cv. Columbia</strain>
    </source>
</reference>
<reference key="2">
    <citation type="journal article" date="2017" name="Plant J.">
        <title>Araport11: a complete reannotation of the Arabidopsis thaliana reference genome.</title>
        <authorList>
            <person name="Cheng C.Y."/>
            <person name="Krishnakumar V."/>
            <person name="Chan A.P."/>
            <person name="Thibaud-Nissen F."/>
            <person name="Schobel S."/>
            <person name="Town C.D."/>
        </authorList>
    </citation>
    <scope>GENOME REANNOTATION</scope>
    <source>
        <strain>cv. Columbia</strain>
    </source>
</reference>
<reference key="3">
    <citation type="journal article" date="2005" name="Plant Physiol.">
        <title>Genome organization of more than 300 defensin-like genes in Arabidopsis.</title>
        <authorList>
            <person name="Silverstein K.A.T."/>
            <person name="Graham M.A."/>
            <person name="Paape T.D."/>
            <person name="VandenBosch K.A."/>
        </authorList>
    </citation>
    <scope>GENE FAMILY</scope>
</reference>
<gene>
    <name type="ordered locus">At5g48515</name>
    <name type="ORF">MJE7</name>
</gene>